<reference key="1">
    <citation type="journal article" date="1996" name="Science">
        <title>Complete genome sequence of the methanogenic archaeon, Methanococcus jannaschii.</title>
        <authorList>
            <person name="Bult C.J."/>
            <person name="White O."/>
            <person name="Olsen G.J."/>
            <person name="Zhou L."/>
            <person name="Fleischmann R.D."/>
            <person name="Sutton G.G."/>
            <person name="Blake J.A."/>
            <person name="FitzGerald L.M."/>
            <person name="Clayton R.A."/>
            <person name="Gocayne J.D."/>
            <person name="Kerlavage A.R."/>
            <person name="Dougherty B.A."/>
            <person name="Tomb J.-F."/>
            <person name="Adams M.D."/>
            <person name="Reich C.I."/>
            <person name="Overbeek R."/>
            <person name="Kirkness E.F."/>
            <person name="Weinstock K.G."/>
            <person name="Merrick J.M."/>
            <person name="Glodek A."/>
            <person name="Scott J.L."/>
            <person name="Geoghagen N.S.M."/>
            <person name="Weidman J.F."/>
            <person name="Fuhrmann J.L."/>
            <person name="Nguyen D."/>
            <person name="Utterback T.R."/>
            <person name="Kelley J.M."/>
            <person name="Peterson J.D."/>
            <person name="Sadow P.W."/>
            <person name="Hanna M.C."/>
            <person name="Cotton M.D."/>
            <person name="Roberts K.M."/>
            <person name="Hurst M.A."/>
            <person name="Kaine B.P."/>
            <person name="Borodovsky M."/>
            <person name="Klenk H.-P."/>
            <person name="Fraser C.M."/>
            <person name="Smith H.O."/>
            <person name="Woese C.R."/>
            <person name="Venter J.C."/>
        </authorList>
    </citation>
    <scope>NUCLEOTIDE SEQUENCE [LARGE SCALE GENOMIC DNA]</scope>
    <source>
        <strain>ATCC 43067 / DSM 2661 / JAL-1 / JCM 10045 / NBRC 100440</strain>
    </source>
</reference>
<reference key="2">
    <citation type="journal article" date="2010" name="J. Mol. Biol.">
        <title>Structure of a two-domain N-terminal fragment of ribosomal protein L10 from Methanococcus jannaschii reveals a specific piece of the archaeal ribosomal stalk.</title>
        <authorList>
            <person name="Kravchenko O."/>
            <person name="Mitroshin I."/>
            <person name="Nikonov S."/>
            <person name="Piendl W."/>
            <person name="Garber M."/>
        </authorList>
    </citation>
    <scope>X-RAY CRYSTALLOGRAPHY (1.6 ANGSTROMS) OF 10-221</scope>
</reference>
<protein>
    <recommendedName>
        <fullName evidence="1">Large ribosomal subunit protein uL10</fullName>
    </recommendedName>
    <alternativeName>
        <fullName evidence="3">50S ribosomal protein L10</fullName>
    </alternativeName>
    <alternativeName>
        <fullName evidence="1">Acidic ribosomal protein P0 homolog</fullName>
    </alternativeName>
    <alternativeName>
        <fullName>MjaL10</fullName>
    </alternativeName>
</protein>
<organism>
    <name type="scientific">Methanocaldococcus jannaschii (strain ATCC 43067 / DSM 2661 / JAL-1 / JCM 10045 / NBRC 100440)</name>
    <name type="common">Methanococcus jannaschii</name>
    <dbReference type="NCBI Taxonomy" id="243232"/>
    <lineage>
        <taxon>Archaea</taxon>
        <taxon>Methanobacteriati</taxon>
        <taxon>Methanobacteriota</taxon>
        <taxon>Methanomada group</taxon>
        <taxon>Methanococci</taxon>
        <taxon>Methanococcales</taxon>
        <taxon>Methanocaldococcaceae</taxon>
        <taxon>Methanocaldococcus</taxon>
    </lineage>
</organism>
<sequence length="338" mass="36751">METKVKAHVAPWKIEEVKTLKGLIKSKPVVAIVDMMDVPAPQLQEIRDKIRDKVKLRMSRNTLIIRALKEAAEELNNPKLAELANYVERGAAILVTDMNPFKLYKLLEENKSPAPVRGGQIAPCDIKVEKGSTGMPPGPFLGELKSVGIPAAIEKGKIAIKEDKVVVKKGEVVSPKLAAVLDRLGIKPIKVGLNILAVYEDGIIYTPDVLKVDEEKLLADIQAAYQNAFNLAFNTAYPAKEVLPFLIQKAFINARALSVETAFVTKETAGDILAKAQAQALALASKLPDEALDEDIKAKLSSVEVSAAPAAEEEKEEEKKEEEKKEEDTGAAGLALLF</sequence>
<name>RL10_METJA</name>
<keyword id="KW-0002">3D-structure</keyword>
<keyword id="KW-1185">Reference proteome</keyword>
<keyword id="KW-0687">Ribonucleoprotein</keyword>
<keyword id="KW-0689">Ribosomal protein</keyword>
<keyword id="KW-0694">RNA-binding</keyword>
<keyword id="KW-0699">rRNA-binding</keyword>
<accession>P54049</accession>
<dbReference type="EMBL" id="L77117">
    <property type="protein sequence ID" value="AAB98499.1"/>
    <property type="molecule type" value="Genomic_DNA"/>
</dbReference>
<dbReference type="RefSeq" id="WP_010870010.1">
    <property type="nucleotide sequence ID" value="NC_000909.1"/>
</dbReference>
<dbReference type="PDB" id="3JSY">
    <property type="method" value="X-ray"/>
    <property type="resolution" value="1.60 A"/>
    <property type="chains" value="A/B=10-221"/>
</dbReference>
<dbReference type="PDB" id="5D6G">
    <property type="method" value="X-ray"/>
    <property type="resolution" value="3.30 A"/>
    <property type="chains" value="A=10-221"/>
</dbReference>
<dbReference type="PDB" id="5D8H">
    <property type="method" value="X-ray"/>
    <property type="resolution" value="2.80 A"/>
    <property type="chains" value="B=9-221"/>
</dbReference>
<dbReference type="PDB" id="5DAR">
    <property type="method" value="X-ray"/>
    <property type="resolution" value="2.90 A"/>
    <property type="chains" value="B/E=10-221"/>
</dbReference>
<dbReference type="PDBsum" id="3JSY"/>
<dbReference type="PDBsum" id="5D6G"/>
<dbReference type="PDBsum" id="5D8H"/>
<dbReference type="PDBsum" id="5DAR"/>
<dbReference type="SMR" id="P54049"/>
<dbReference type="FunCoup" id="P54049">
    <property type="interactions" value="172"/>
</dbReference>
<dbReference type="STRING" id="243232.MJ_0509"/>
<dbReference type="PaxDb" id="243232-MJ_0509"/>
<dbReference type="EnsemblBacteria" id="AAB98499">
    <property type="protein sequence ID" value="AAB98499"/>
    <property type="gene ID" value="MJ_0509"/>
</dbReference>
<dbReference type="GeneID" id="1451371"/>
<dbReference type="KEGG" id="mja:MJ_0509"/>
<dbReference type="eggNOG" id="arCOG04288">
    <property type="taxonomic scope" value="Archaea"/>
</dbReference>
<dbReference type="HOGENOM" id="CLU_053173_0_0_2"/>
<dbReference type="InParanoid" id="P54049"/>
<dbReference type="OrthoDB" id="30930at2157"/>
<dbReference type="PhylomeDB" id="P54049"/>
<dbReference type="EvolutionaryTrace" id="P54049"/>
<dbReference type="Proteomes" id="UP000000805">
    <property type="component" value="Chromosome"/>
</dbReference>
<dbReference type="GO" id="GO:0022625">
    <property type="term" value="C:cytosolic large ribosomal subunit"/>
    <property type="evidence" value="ECO:0000318"/>
    <property type="project" value="GO_Central"/>
</dbReference>
<dbReference type="GO" id="GO:0070180">
    <property type="term" value="F:large ribosomal subunit rRNA binding"/>
    <property type="evidence" value="ECO:0000318"/>
    <property type="project" value="GO_Central"/>
</dbReference>
<dbReference type="GO" id="GO:0003735">
    <property type="term" value="F:structural constituent of ribosome"/>
    <property type="evidence" value="ECO:0000318"/>
    <property type="project" value="GO_Central"/>
</dbReference>
<dbReference type="GO" id="GO:0002181">
    <property type="term" value="P:cytoplasmic translation"/>
    <property type="evidence" value="ECO:0000318"/>
    <property type="project" value="GO_Central"/>
</dbReference>
<dbReference type="CDD" id="cd05795">
    <property type="entry name" value="Ribosomal_P0_L10e"/>
    <property type="match status" value="1"/>
</dbReference>
<dbReference type="FunFam" id="3.30.70.1730:FF:000013">
    <property type="entry name" value="50S ribosomal protein L10"/>
    <property type="match status" value="1"/>
</dbReference>
<dbReference type="FunFam" id="3.90.105.20:FF:000001">
    <property type="entry name" value="60S acidic ribosomal protein P0"/>
    <property type="match status" value="1"/>
</dbReference>
<dbReference type="Gene3D" id="3.30.70.1730">
    <property type="match status" value="1"/>
</dbReference>
<dbReference type="Gene3D" id="3.90.105.20">
    <property type="match status" value="1"/>
</dbReference>
<dbReference type="Gene3D" id="6.10.140.760">
    <property type="match status" value="1"/>
</dbReference>
<dbReference type="HAMAP" id="MF_00280">
    <property type="entry name" value="Ribosomal_uL10_arch"/>
    <property type="match status" value="1"/>
</dbReference>
<dbReference type="InterPro" id="IPR050323">
    <property type="entry name" value="Ribosomal_protein_uL10"/>
</dbReference>
<dbReference type="InterPro" id="IPR001790">
    <property type="entry name" value="Ribosomal_uL10"/>
</dbReference>
<dbReference type="InterPro" id="IPR040637">
    <property type="entry name" value="Ribosomal_uL10-like_insert"/>
</dbReference>
<dbReference type="InterPro" id="IPR043164">
    <property type="entry name" value="Ribosomal_uL10-like_insert_sf"/>
</dbReference>
<dbReference type="InterPro" id="IPR043141">
    <property type="entry name" value="Ribosomal_uL10-like_sf"/>
</dbReference>
<dbReference type="InterPro" id="IPR022909">
    <property type="entry name" value="Ribosomal_uL10_arc"/>
</dbReference>
<dbReference type="NCBIfam" id="NF003096">
    <property type="entry name" value="PRK04019.1-2"/>
    <property type="match status" value="1"/>
</dbReference>
<dbReference type="NCBIfam" id="NF003098">
    <property type="entry name" value="PRK04019.1-5"/>
    <property type="match status" value="1"/>
</dbReference>
<dbReference type="PANTHER" id="PTHR45699">
    <property type="entry name" value="60S ACIDIC RIBOSOMAL PROTEIN P0"/>
    <property type="match status" value="1"/>
</dbReference>
<dbReference type="PANTHER" id="PTHR45699:SF3">
    <property type="entry name" value="LARGE RIBOSOMAL SUBUNIT PROTEIN UL10"/>
    <property type="match status" value="1"/>
</dbReference>
<dbReference type="Pfam" id="PF00466">
    <property type="entry name" value="Ribosomal_L10"/>
    <property type="match status" value="1"/>
</dbReference>
<dbReference type="Pfam" id="PF17777">
    <property type="entry name" value="RL10P_insert"/>
    <property type="match status" value="1"/>
</dbReference>
<dbReference type="SUPFAM" id="SSF160369">
    <property type="entry name" value="Ribosomal protein L10-like"/>
    <property type="match status" value="1"/>
</dbReference>
<evidence type="ECO:0000255" key="1">
    <source>
        <dbReference type="HAMAP-Rule" id="MF_00280"/>
    </source>
</evidence>
<evidence type="ECO:0000256" key="2">
    <source>
        <dbReference type="SAM" id="MobiDB-lite"/>
    </source>
</evidence>
<evidence type="ECO:0000305" key="3"/>
<evidence type="ECO:0007829" key="4">
    <source>
        <dbReference type="PDB" id="3JSY"/>
    </source>
</evidence>
<evidence type="ECO:0007829" key="5">
    <source>
        <dbReference type="PDB" id="5D6G"/>
    </source>
</evidence>
<gene>
    <name evidence="1" type="primary">rpl10</name>
    <name evidence="1" type="synonym">rplP0</name>
    <name type="ordered locus">MJ0509</name>
</gene>
<proteinExistence type="evidence at protein level"/>
<comment type="function">
    <text evidence="3">Forms part of the ribosomal stalk, playing a central role in the interaction of the ribosome with GTP-bound translation factors.</text>
</comment>
<comment type="subunit">
    <text evidence="3">Part of the 50S ribosomal subunit. Forms part of the ribosomal stalk which helps the ribosome interact with GTP-bound translation factors. Forms a heptameric L10(L12)2(L12)2(L12)2 complex, where L10 forms an elongated spine to which the L12 dimers bind in a sequential fashion (Probable).</text>
</comment>
<comment type="similarity">
    <text evidence="1">Belongs to the universal ribosomal protein uL10 family.</text>
</comment>
<feature type="chain" id="PRO_0000154793" description="Large ribosomal subunit protein uL10">
    <location>
        <begin position="1"/>
        <end position="338"/>
    </location>
</feature>
<feature type="region of interest" description="Disordered" evidence="2">
    <location>
        <begin position="303"/>
        <end position="338"/>
    </location>
</feature>
<feature type="compositionally biased region" description="Basic and acidic residues" evidence="2">
    <location>
        <begin position="317"/>
        <end position="328"/>
    </location>
</feature>
<feature type="helix" evidence="4">
    <location>
        <begin position="11"/>
        <end position="26"/>
    </location>
</feature>
<feature type="strand" evidence="4">
    <location>
        <begin position="27"/>
        <end position="34"/>
    </location>
</feature>
<feature type="helix" evidence="4">
    <location>
        <begin position="40"/>
        <end position="50"/>
    </location>
</feature>
<feature type="turn" evidence="4">
    <location>
        <begin position="51"/>
        <end position="53"/>
    </location>
</feature>
<feature type="strand" evidence="4">
    <location>
        <begin position="54"/>
        <end position="58"/>
    </location>
</feature>
<feature type="helix" evidence="4">
    <location>
        <begin position="61"/>
        <end position="74"/>
    </location>
</feature>
<feature type="helix" evidence="4">
    <location>
        <begin position="78"/>
        <end position="86"/>
    </location>
</feature>
<feature type="strand" evidence="4">
    <location>
        <begin position="89"/>
        <end position="98"/>
    </location>
</feature>
<feature type="helix" evidence="4">
    <location>
        <begin position="100"/>
        <end position="109"/>
    </location>
</feature>
<feature type="strand" evidence="4">
    <location>
        <begin position="112"/>
        <end position="114"/>
    </location>
</feature>
<feature type="strand" evidence="4">
    <location>
        <begin position="126"/>
        <end position="128"/>
    </location>
</feature>
<feature type="strand" evidence="4">
    <location>
        <begin position="130"/>
        <end position="132"/>
    </location>
</feature>
<feature type="helix" evidence="4">
    <location>
        <begin position="140"/>
        <end position="146"/>
    </location>
</feature>
<feature type="strand" evidence="4">
    <location>
        <begin position="151"/>
        <end position="154"/>
    </location>
</feature>
<feature type="strand" evidence="4">
    <location>
        <begin position="157"/>
        <end position="160"/>
    </location>
</feature>
<feature type="strand" evidence="4">
    <location>
        <begin position="164"/>
        <end position="167"/>
    </location>
</feature>
<feature type="strand" evidence="5">
    <location>
        <begin position="169"/>
        <end position="171"/>
    </location>
</feature>
<feature type="helix" evidence="4">
    <location>
        <begin position="175"/>
        <end position="183"/>
    </location>
</feature>
<feature type="strand" evidence="4">
    <location>
        <begin position="189"/>
        <end position="192"/>
    </location>
</feature>
<feature type="strand" evidence="4">
    <location>
        <begin position="194"/>
        <end position="200"/>
    </location>
</feature>
<feature type="strand" evidence="4">
    <location>
        <begin position="203"/>
        <end position="205"/>
    </location>
</feature>
<feature type="helix" evidence="4">
    <location>
        <begin position="207"/>
        <end position="213"/>
    </location>
</feature>